<protein>
    <recommendedName>
        <fullName>Autoinducer 2 import system permease protein LsrC</fullName>
        <shortName>AI-2 import system permease protein LsrC</shortName>
    </recommendedName>
</protein>
<reference key="1">
    <citation type="submission" date="2008-04" db="EMBL/GenBank/DDBJ databases">
        <title>Complete sequence of Yersinia pseudotuberculosis PB1/+.</title>
        <authorList>
            <person name="Copeland A."/>
            <person name="Lucas S."/>
            <person name="Lapidus A."/>
            <person name="Glavina del Rio T."/>
            <person name="Dalin E."/>
            <person name="Tice H."/>
            <person name="Bruce D."/>
            <person name="Goodwin L."/>
            <person name="Pitluck S."/>
            <person name="Munk A.C."/>
            <person name="Brettin T."/>
            <person name="Detter J.C."/>
            <person name="Han C."/>
            <person name="Tapia R."/>
            <person name="Schmutz J."/>
            <person name="Larimer F."/>
            <person name="Land M."/>
            <person name="Hauser L."/>
            <person name="Challacombe J.F."/>
            <person name="Green L."/>
            <person name="Lindler L.E."/>
            <person name="Nikolich M.P."/>
            <person name="Richardson P."/>
        </authorList>
    </citation>
    <scope>NUCLEOTIDE SEQUENCE [LARGE SCALE GENOMIC DNA]</scope>
    <source>
        <strain>PB1/+</strain>
    </source>
</reference>
<sequence length="351" mass="37277">MLKFIQNNREGTALLAILTLFALLGIIDRNYFSLQTFTMIFSSAQILILLAIGATLVMLTRNIDVSVGSITGLCAVTVGMALNAGFGLVASCLFALLVGMVAGFFNGILVTWLRIPAIVATLGTLGLYRGLMLLLTGGKWIEGLPADLKSLSTPILFSISPIGWLTMLLILSMAWLLGNTAFGRSFYATGDNLQGARQLGVRTDSIRIFAFSMNGVMAALAGIVFASQIGFIPNQTGNGLEMKAIAACVLGGISLLGGTGTIIGAILGAFLLTQIDSVLVLLRLPAWWNDFIAGLVLLGVLVFDGRLRCAVERNIRQQKYARFTAQAIISDKKPTVSDNNPAASNKKKAAL</sequence>
<name>LSRC_YERPB</name>
<comment type="function">
    <text evidence="1">Part of the ABC transporter complex LsrABCD involved in autoinducer 2 (AI-2) import. Probably responsible for the translocation of the substrate across the membrane (By similarity).</text>
</comment>
<comment type="subunit">
    <text evidence="1">The complex is composed of two ATP-binding proteins (LsrA), two transmembrane proteins (LsrC and LsrD) and a solute-binding protein (LsrB).</text>
</comment>
<comment type="subcellular location">
    <subcellularLocation>
        <location evidence="1">Cell inner membrane</location>
        <topology evidence="1">Multi-pass membrane protein</topology>
    </subcellularLocation>
</comment>
<comment type="similarity">
    <text evidence="3">Belongs to the binding-protein-dependent transport system permease family. AraH/RbsC subfamily.</text>
</comment>
<proteinExistence type="inferred from homology"/>
<feature type="chain" id="PRO_0000351360" description="Autoinducer 2 import system permease protein LsrC">
    <location>
        <begin position="1"/>
        <end position="351"/>
    </location>
</feature>
<feature type="transmembrane region" description="Helical" evidence="2">
    <location>
        <begin position="14"/>
        <end position="34"/>
    </location>
</feature>
<feature type="transmembrane region" description="Helical" evidence="2">
    <location>
        <begin position="39"/>
        <end position="59"/>
    </location>
</feature>
<feature type="transmembrane region" description="Helical" evidence="2">
    <location>
        <begin position="70"/>
        <end position="90"/>
    </location>
</feature>
<feature type="transmembrane region" description="Helical" evidence="2">
    <location>
        <begin position="93"/>
        <end position="113"/>
    </location>
</feature>
<feature type="transmembrane region" description="Helical" evidence="2">
    <location>
        <begin position="115"/>
        <end position="135"/>
    </location>
</feature>
<feature type="transmembrane region" description="Helical" evidence="2">
    <location>
        <begin position="155"/>
        <end position="175"/>
    </location>
</feature>
<feature type="transmembrane region" description="Helical" evidence="2">
    <location>
        <begin position="213"/>
        <end position="233"/>
    </location>
</feature>
<feature type="transmembrane region" description="Helical" evidence="2">
    <location>
        <begin position="252"/>
        <end position="272"/>
    </location>
</feature>
<feature type="transmembrane region" description="Helical" evidence="2">
    <location>
        <begin position="284"/>
        <end position="304"/>
    </location>
</feature>
<evidence type="ECO:0000250" key="1"/>
<evidence type="ECO:0000255" key="2"/>
<evidence type="ECO:0000305" key="3"/>
<organism>
    <name type="scientific">Yersinia pseudotuberculosis serotype IB (strain PB1/+)</name>
    <dbReference type="NCBI Taxonomy" id="502801"/>
    <lineage>
        <taxon>Bacteria</taxon>
        <taxon>Pseudomonadati</taxon>
        <taxon>Pseudomonadota</taxon>
        <taxon>Gammaproteobacteria</taxon>
        <taxon>Enterobacterales</taxon>
        <taxon>Yersiniaceae</taxon>
        <taxon>Yersinia</taxon>
    </lineage>
</organism>
<gene>
    <name type="primary">lsrC</name>
    <name type="ordered locus">YPTS_0575</name>
</gene>
<accession>B2K3G0</accession>
<dbReference type="EMBL" id="CP001048">
    <property type="protein sequence ID" value="ACC87559.1"/>
    <property type="molecule type" value="Genomic_DNA"/>
</dbReference>
<dbReference type="RefSeq" id="WP_011191664.1">
    <property type="nucleotide sequence ID" value="NZ_CP009780.1"/>
</dbReference>
<dbReference type="KEGG" id="ypb:YPTS_0575"/>
<dbReference type="PATRIC" id="fig|502801.10.peg.4251"/>
<dbReference type="GO" id="GO:0005886">
    <property type="term" value="C:plasma membrane"/>
    <property type="evidence" value="ECO:0007669"/>
    <property type="project" value="UniProtKB-SubCell"/>
</dbReference>
<dbReference type="GO" id="GO:0022857">
    <property type="term" value="F:transmembrane transporter activity"/>
    <property type="evidence" value="ECO:0007669"/>
    <property type="project" value="InterPro"/>
</dbReference>
<dbReference type="CDD" id="cd06579">
    <property type="entry name" value="TM_PBP1_transp_AraH_like"/>
    <property type="match status" value="1"/>
</dbReference>
<dbReference type="InterPro" id="IPR001851">
    <property type="entry name" value="ABC_transp_permease"/>
</dbReference>
<dbReference type="NCBIfam" id="NF011961">
    <property type="entry name" value="PRK15432.1"/>
    <property type="match status" value="1"/>
</dbReference>
<dbReference type="PANTHER" id="PTHR32196">
    <property type="entry name" value="ABC TRANSPORTER PERMEASE PROTEIN YPHD-RELATED-RELATED"/>
    <property type="match status" value="1"/>
</dbReference>
<dbReference type="PANTHER" id="PTHR32196:SF29">
    <property type="entry name" value="AUTOINDUCER 2 IMPORT SYSTEM PERMEASE PROTEIN LSRC"/>
    <property type="match status" value="1"/>
</dbReference>
<dbReference type="Pfam" id="PF02653">
    <property type="entry name" value="BPD_transp_2"/>
    <property type="match status" value="1"/>
</dbReference>
<keyword id="KW-0997">Cell inner membrane</keyword>
<keyword id="KW-1003">Cell membrane</keyword>
<keyword id="KW-0472">Membrane</keyword>
<keyword id="KW-0812">Transmembrane</keyword>
<keyword id="KW-1133">Transmembrane helix</keyword>
<keyword id="KW-0813">Transport</keyword>